<keyword id="KW-0255">Endonuclease</keyword>
<keyword id="KW-0378">Hydrolase</keyword>
<keyword id="KW-0540">Nuclease</keyword>
<keyword id="KW-1185">Reference proteome</keyword>
<keyword id="KW-0694">RNA-binding</keyword>
<keyword id="KW-0819">tRNA processing</keyword>
<comment type="function">
    <text evidence="1">RNaseP catalyzes the removal of the 5'-leader sequence from pre-tRNA to produce the mature 5'-terminus. It can also cleave other RNA substrates such as 4.5S RNA. The protein component plays an auxiliary but essential role in vivo by binding to the 5'-leader sequence and broadening the substrate specificity of the ribozyme.</text>
</comment>
<comment type="catalytic activity">
    <reaction evidence="1">
        <text>Endonucleolytic cleavage of RNA, removing 5'-extranucleotides from tRNA precursor.</text>
        <dbReference type="EC" id="3.1.26.5"/>
    </reaction>
</comment>
<comment type="subunit">
    <text evidence="1">Consists of a catalytic RNA component (M1 or rnpB) and a protein subunit.</text>
</comment>
<comment type="similarity">
    <text evidence="1">Belongs to the RnpA family.</text>
</comment>
<feature type="chain" id="PRO_1000194630" description="Ribonuclease P protein component">
    <location>
        <begin position="1"/>
        <end position="118"/>
    </location>
</feature>
<accession>B8FMU9</accession>
<protein>
    <recommendedName>
        <fullName evidence="1">Ribonuclease P protein component</fullName>
        <shortName evidence="1">RNase P protein</shortName>
        <shortName evidence="1">RNaseP protein</shortName>
        <ecNumber evidence="1">3.1.26.5</ecNumber>
    </recommendedName>
    <alternativeName>
        <fullName evidence="1">Protein C5</fullName>
    </alternativeName>
</protein>
<dbReference type="EC" id="3.1.26.5" evidence="1"/>
<dbReference type="EMBL" id="CP001322">
    <property type="protein sequence ID" value="ACL05819.1"/>
    <property type="molecule type" value="Genomic_DNA"/>
</dbReference>
<dbReference type="RefSeq" id="WP_015948866.1">
    <property type="nucleotide sequence ID" value="NC_011768.1"/>
</dbReference>
<dbReference type="SMR" id="B8FMU9"/>
<dbReference type="KEGG" id="dal:Dalk_4135"/>
<dbReference type="eggNOG" id="COG0594">
    <property type="taxonomic scope" value="Bacteria"/>
</dbReference>
<dbReference type="HOGENOM" id="CLU_117179_9_1_7"/>
<dbReference type="Proteomes" id="UP000000739">
    <property type="component" value="Chromosome"/>
</dbReference>
<dbReference type="GO" id="GO:0030677">
    <property type="term" value="C:ribonuclease P complex"/>
    <property type="evidence" value="ECO:0007669"/>
    <property type="project" value="TreeGrafter"/>
</dbReference>
<dbReference type="GO" id="GO:0042781">
    <property type="term" value="F:3'-tRNA processing endoribonuclease activity"/>
    <property type="evidence" value="ECO:0007669"/>
    <property type="project" value="TreeGrafter"/>
</dbReference>
<dbReference type="GO" id="GO:0004526">
    <property type="term" value="F:ribonuclease P activity"/>
    <property type="evidence" value="ECO:0007669"/>
    <property type="project" value="UniProtKB-UniRule"/>
</dbReference>
<dbReference type="GO" id="GO:0000049">
    <property type="term" value="F:tRNA binding"/>
    <property type="evidence" value="ECO:0007669"/>
    <property type="project" value="UniProtKB-UniRule"/>
</dbReference>
<dbReference type="GO" id="GO:0001682">
    <property type="term" value="P:tRNA 5'-leader removal"/>
    <property type="evidence" value="ECO:0007669"/>
    <property type="project" value="UniProtKB-UniRule"/>
</dbReference>
<dbReference type="Gene3D" id="3.30.230.10">
    <property type="match status" value="1"/>
</dbReference>
<dbReference type="HAMAP" id="MF_00227">
    <property type="entry name" value="RNase_P"/>
    <property type="match status" value="1"/>
</dbReference>
<dbReference type="InterPro" id="IPR020568">
    <property type="entry name" value="Ribosomal_Su5_D2-typ_SF"/>
</dbReference>
<dbReference type="InterPro" id="IPR014721">
    <property type="entry name" value="Ribsml_uS5_D2-typ_fold_subgr"/>
</dbReference>
<dbReference type="InterPro" id="IPR000100">
    <property type="entry name" value="RNase_P"/>
</dbReference>
<dbReference type="InterPro" id="IPR020539">
    <property type="entry name" value="RNase_P_CS"/>
</dbReference>
<dbReference type="NCBIfam" id="TIGR00188">
    <property type="entry name" value="rnpA"/>
    <property type="match status" value="1"/>
</dbReference>
<dbReference type="PANTHER" id="PTHR33992">
    <property type="entry name" value="RIBONUCLEASE P PROTEIN COMPONENT"/>
    <property type="match status" value="1"/>
</dbReference>
<dbReference type="PANTHER" id="PTHR33992:SF1">
    <property type="entry name" value="RIBONUCLEASE P PROTEIN COMPONENT"/>
    <property type="match status" value="1"/>
</dbReference>
<dbReference type="Pfam" id="PF00825">
    <property type="entry name" value="Ribonuclease_P"/>
    <property type="match status" value="1"/>
</dbReference>
<dbReference type="SUPFAM" id="SSF54211">
    <property type="entry name" value="Ribosomal protein S5 domain 2-like"/>
    <property type="match status" value="1"/>
</dbReference>
<dbReference type="PROSITE" id="PS00648">
    <property type="entry name" value="RIBONUCLEASE_P"/>
    <property type="match status" value="1"/>
</dbReference>
<sequence>MGSFSYTKEQRLRKRPQFLALGERGKRVQNAYFIAVFAPAQGKVSRLGVTVTKKVGDAVTRNRIKRCVREYFRLNQHRLKAPVDINVIAKKACCQQESPLLAASLDHLFNRVSEGSRH</sequence>
<organism>
    <name type="scientific">Desulfatibacillum aliphaticivorans</name>
    <dbReference type="NCBI Taxonomy" id="218208"/>
    <lineage>
        <taxon>Bacteria</taxon>
        <taxon>Pseudomonadati</taxon>
        <taxon>Thermodesulfobacteriota</taxon>
        <taxon>Desulfobacteria</taxon>
        <taxon>Desulfobacterales</taxon>
        <taxon>Desulfatibacillaceae</taxon>
        <taxon>Desulfatibacillum</taxon>
    </lineage>
</organism>
<proteinExistence type="inferred from homology"/>
<name>RNPA_DESAL</name>
<evidence type="ECO:0000255" key="1">
    <source>
        <dbReference type="HAMAP-Rule" id="MF_00227"/>
    </source>
</evidence>
<reference key="1">
    <citation type="journal article" date="2012" name="Environ. Microbiol.">
        <title>The genome sequence of Desulfatibacillum alkenivorans AK-01: a blueprint for anaerobic alkane oxidation.</title>
        <authorList>
            <person name="Callaghan A.V."/>
            <person name="Morris B.E."/>
            <person name="Pereira I.A."/>
            <person name="McInerney M.J."/>
            <person name="Austin R.N."/>
            <person name="Groves J.T."/>
            <person name="Kukor J.J."/>
            <person name="Suflita J.M."/>
            <person name="Young L.Y."/>
            <person name="Zylstra G.J."/>
            <person name="Wawrik B."/>
        </authorList>
    </citation>
    <scope>NUCLEOTIDE SEQUENCE [LARGE SCALE GENOMIC DNA]</scope>
    <source>
        <strain>AK-01</strain>
    </source>
</reference>
<gene>
    <name evidence="1" type="primary">rnpA</name>
    <name type="ordered locus">Dalk_4135</name>
</gene>